<name>MTND4_ORYSJ</name>
<accession>Q7XEJ5</accession>
<accession>A3C4T4</accession>
<accession>Q0IXN2</accession>
<organism>
    <name type="scientific">Oryza sativa subsp. japonica</name>
    <name type="common">Rice</name>
    <dbReference type="NCBI Taxonomy" id="39947"/>
    <lineage>
        <taxon>Eukaryota</taxon>
        <taxon>Viridiplantae</taxon>
        <taxon>Streptophyta</taxon>
        <taxon>Embryophyta</taxon>
        <taxon>Tracheophyta</taxon>
        <taxon>Spermatophyta</taxon>
        <taxon>Magnoliopsida</taxon>
        <taxon>Liliopsida</taxon>
        <taxon>Poales</taxon>
        <taxon>Poaceae</taxon>
        <taxon>BOP clade</taxon>
        <taxon>Oryzoideae</taxon>
        <taxon>Oryzeae</taxon>
        <taxon>Oryzinae</taxon>
        <taxon>Oryza</taxon>
        <taxon>Oryza sativa</taxon>
    </lineage>
</organism>
<feature type="chain" id="PRO_0000223199" description="Acireductone dioxygenase 4">
    <location>
        <begin position="1"/>
        <end position="184"/>
    </location>
</feature>
<feature type="binding site" evidence="1">
    <location>
        <position position="86"/>
    </location>
    <ligand>
        <name>Fe(2+)</name>
        <dbReference type="ChEBI" id="CHEBI:29033"/>
        <note>for iron-dependent acireductone dioxygenase activity</note>
    </ligand>
</feature>
<feature type="binding site" evidence="1">
    <location>
        <position position="86"/>
    </location>
    <ligand>
        <name>Ni(2+)</name>
        <dbReference type="ChEBI" id="CHEBI:49786"/>
        <note>for nickel-dependent acireductone dioxygenase activity</note>
    </ligand>
</feature>
<feature type="binding site" evidence="1">
    <location>
        <position position="88"/>
    </location>
    <ligand>
        <name>Fe(2+)</name>
        <dbReference type="ChEBI" id="CHEBI:29033"/>
        <note>for iron-dependent acireductone dioxygenase activity</note>
    </ligand>
</feature>
<feature type="binding site" evidence="1">
    <location>
        <position position="88"/>
    </location>
    <ligand>
        <name>Ni(2+)</name>
        <dbReference type="ChEBI" id="CHEBI:49786"/>
        <note>for nickel-dependent acireductone dioxygenase activity</note>
    </ligand>
</feature>
<feature type="binding site" evidence="1">
    <location>
        <position position="92"/>
    </location>
    <ligand>
        <name>Fe(2+)</name>
        <dbReference type="ChEBI" id="CHEBI:29033"/>
        <note>for iron-dependent acireductone dioxygenase activity</note>
    </ligand>
</feature>
<feature type="binding site" evidence="1">
    <location>
        <position position="92"/>
    </location>
    <ligand>
        <name>Ni(2+)</name>
        <dbReference type="ChEBI" id="CHEBI:49786"/>
        <note>for nickel-dependent acireductone dioxygenase activity</note>
    </ligand>
</feature>
<feature type="binding site" evidence="1">
    <location>
        <position position="131"/>
    </location>
    <ligand>
        <name>Fe(2+)</name>
        <dbReference type="ChEBI" id="CHEBI:29033"/>
        <note>for iron-dependent acireductone dioxygenase activity</note>
    </ligand>
</feature>
<feature type="binding site" evidence="1">
    <location>
        <position position="131"/>
    </location>
    <ligand>
        <name>Ni(2+)</name>
        <dbReference type="ChEBI" id="CHEBI:49786"/>
        <note>for nickel-dependent acireductone dioxygenase activity</note>
    </ligand>
</feature>
<sequence>MAHLVWMLGENGEEKSFENPNELLPLSRLEEIGVLYWHLDPKKSESEEELTKIRRERGYSYFDLTEICPDKLENYEEKLKSFYCEHIHADEEIRYCLEGSGYFDVRDKDDKWIRIWIKEGDMIILPAGIYHRFIVDSNNYIKLMRLFIGEPVWTAYNRPQEDHPVRQEYVKNVKGDTGFALAAH</sequence>
<evidence type="ECO:0000255" key="1">
    <source>
        <dbReference type="HAMAP-Rule" id="MF_03154"/>
    </source>
</evidence>
<evidence type="ECO:0000312" key="2">
    <source>
        <dbReference type="EMBL" id="EAZ16097.1"/>
    </source>
</evidence>
<protein>
    <recommendedName>
        <fullName evidence="1">Acireductone dioxygenase 4</fullName>
    </recommendedName>
    <alternativeName>
        <fullName evidence="1">Acireductone dioxygenase (Fe(2+)-requiring) 4</fullName>
        <shortName evidence="1">ARD' 4</shortName>
        <shortName evidence="1">Fe-ARD 4</shortName>
        <ecNumber evidence="1">1.13.11.54</ecNumber>
    </alternativeName>
    <alternativeName>
        <fullName evidence="1">Acireductone dioxygenase (Ni(2+)-requiring) 4</fullName>
        <shortName evidence="1">ARD 4</shortName>
        <shortName evidence="1">Ni-ARD 4</shortName>
        <ecNumber evidence="1">1.13.11.53</ecNumber>
    </alternativeName>
</protein>
<dbReference type="EC" id="1.13.11.54" evidence="1"/>
<dbReference type="EC" id="1.13.11.53" evidence="1"/>
<dbReference type="EMBL" id="DP000086">
    <property type="protein sequence ID" value="AAP53794.1"/>
    <property type="molecule type" value="Genomic_DNA"/>
</dbReference>
<dbReference type="EMBL" id="AP008216">
    <property type="protein sequence ID" value="BAF26533.1"/>
    <property type="molecule type" value="Genomic_DNA"/>
</dbReference>
<dbReference type="EMBL" id="AP014966">
    <property type="protein sequence ID" value="BAT10877.1"/>
    <property type="molecule type" value="Genomic_DNA"/>
</dbReference>
<dbReference type="EMBL" id="CM000147">
    <property type="protein sequence ID" value="EAZ16097.1"/>
    <property type="molecule type" value="Genomic_DNA"/>
</dbReference>
<dbReference type="EMBL" id="AK071316">
    <property type="protein sequence ID" value="BAG92429.1"/>
    <property type="molecule type" value="mRNA"/>
</dbReference>
<dbReference type="RefSeq" id="XP_015612793.1">
    <property type="nucleotide sequence ID" value="XM_015757307.1"/>
</dbReference>
<dbReference type="SMR" id="Q7XEJ5"/>
<dbReference type="FunCoup" id="Q7XEJ5">
    <property type="interactions" value="321"/>
</dbReference>
<dbReference type="STRING" id="39947.Q7XEJ5"/>
<dbReference type="PaxDb" id="39947-Q7XEJ5"/>
<dbReference type="EnsemblPlants" id="Os10t0419500-01">
    <property type="protein sequence ID" value="Os10t0419500-01"/>
    <property type="gene ID" value="Os10g0419500"/>
</dbReference>
<dbReference type="Gramene" id="Os10t0419500-01">
    <property type="protein sequence ID" value="Os10t0419500-01"/>
    <property type="gene ID" value="Os10g0419500"/>
</dbReference>
<dbReference type="KEGG" id="dosa:Os10g0419500"/>
<dbReference type="eggNOG" id="KOG2107">
    <property type="taxonomic scope" value="Eukaryota"/>
</dbReference>
<dbReference type="HOGENOM" id="CLU_090154_0_1_1"/>
<dbReference type="InParanoid" id="Q7XEJ5"/>
<dbReference type="OMA" id="NNYIKLM"/>
<dbReference type="OrthoDB" id="1867259at2759"/>
<dbReference type="UniPathway" id="UPA00904">
    <property type="reaction ID" value="UER00878"/>
</dbReference>
<dbReference type="Proteomes" id="UP000000763">
    <property type="component" value="Chromosome 10"/>
</dbReference>
<dbReference type="Proteomes" id="UP000007752">
    <property type="component" value="Chromosome 10"/>
</dbReference>
<dbReference type="Proteomes" id="UP000059680">
    <property type="component" value="Chromosome 10"/>
</dbReference>
<dbReference type="GO" id="GO:0005737">
    <property type="term" value="C:cytoplasm"/>
    <property type="evidence" value="ECO:0007669"/>
    <property type="project" value="UniProtKB-SubCell"/>
</dbReference>
<dbReference type="GO" id="GO:0005634">
    <property type="term" value="C:nucleus"/>
    <property type="evidence" value="ECO:0007669"/>
    <property type="project" value="UniProtKB-SubCell"/>
</dbReference>
<dbReference type="GO" id="GO:0010308">
    <property type="term" value="F:acireductone dioxygenase (Ni2+-requiring) activity"/>
    <property type="evidence" value="ECO:0007669"/>
    <property type="project" value="UniProtKB-UniRule"/>
</dbReference>
<dbReference type="GO" id="GO:0010309">
    <property type="term" value="F:acireductone dioxygenase [iron(II)-requiring] activity"/>
    <property type="evidence" value="ECO:0000318"/>
    <property type="project" value="GO_Central"/>
</dbReference>
<dbReference type="GO" id="GO:0005506">
    <property type="term" value="F:iron ion binding"/>
    <property type="evidence" value="ECO:0007669"/>
    <property type="project" value="UniProtKB-UniRule"/>
</dbReference>
<dbReference type="GO" id="GO:0016151">
    <property type="term" value="F:nickel cation binding"/>
    <property type="evidence" value="ECO:0007669"/>
    <property type="project" value="UniProtKB-UniRule"/>
</dbReference>
<dbReference type="GO" id="GO:0019509">
    <property type="term" value="P:L-methionine salvage from methylthioadenosine"/>
    <property type="evidence" value="ECO:0007669"/>
    <property type="project" value="UniProtKB-UniRule"/>
</dbReference>
<dbReference type="GO" id="GO:0006555">
    <property type="term" value="P:methionine metabolic process"/>
    <property type="evidence" value="ECO:0000318"/>
    <property type="project" value="GO_Central"/>
</dbReference>
<dbReference type="CDD" id="cd02232">
    <property type="entry name" value="cupin_ARD"/>
    <property type="match status" value="1"/>
</dbReference>
<dbReference type="FunFam" id="2.60.120.10:FF:000031">
    <property type="entry name" value="1,2-dihydroxy-3-keto-5-methylthiopentene dioxygenase"/>
    <property type="match status" value="1"/>
</dbReference>
<dbReference type="Gene3D" id="2.60.120.10">
    <property type="entry name" value="Jelly Rolls"/>
    <property type="match status" value="1"/>
</dbReference>
<dbReference type="HAMAP" id="MF_03154">
    <property type="entry name" value="Salvage_MtnD_euk"/>
    <property type="match status" value="1"/>
</dbReference>
<dbReference type="InterPro" id="IPR004313">
    <property type="entry name" value="ARD"/>
</dbReference>
<dbReference type="InterPro" id="IPR027496">
    <property type="entry name" value="ARD_euk"/>
</dbReference>
<dbReference type="InterPro" id="IPR014710">
    <property type="entry name" value="RmlC-like_jellyroll"/>
</dbReference>
<dbReference type="InterPro" id="IPR011051">
    <property type="entry name" value="RmlC_Cupin_sf"/>
</dbReference>
<dbReference type="PANTHER" id="PTHR23418">
    <property type="entry name" value="ACIREDUCTONE DIOXYGENASE"/>
    <property type="match status" value="1"/>
</dbReference>
<dbReference type="PANTHER" id="PTHR23418:SF4">
    <property type="entry name" value="ACIREDUCTONE DIOXYGENASE 4"/>
    <property type="match status" value="1"/>
</dbReference>
<dbReference type="Pfam" id="PF03079">
    <property type="entry name" value="ARD"/>
    <property type="match status" value="1"/>
</dbReference>
<dbReference type="SUPFAM" id="SSF51182">
    <property type="entry name" value="RmlC-like cupins"/>
    <property type="match status" value="1"/>
</dbReference>
<comment type="function">
    <text evidence="1">Catalyzes 2 different reactions between oxygen and the acireductone 1,2-dihydroxy-3-keto-5-methylthiopentene (DHK-MTPene) depending upon the metal bound in the active site. Fe-containing acireductone dioxygenase (Fe-ARD) produces formate and 2-keto-4-methylthiobutyrate (KMTB), the alpha-ketoacid precursor of methionine in the methionine recycle pathway. Ni-containing acireductone dioxygenase (Ni-ARD) produces methylthiopropionate, carbon monoxide and formate, and does not lie on the methionine recycle pathway.</text>
</comment>
<comment type="catalytic activity">
    <reaction evidence="1">
        <text>1,2-dihydroxy-5-(methylsulfanyl)pent-1-en-3-one + O2 = 4-methylsulfanyl-2-oxobutanoate + formate + 2 H(+)</text>
        <dbReference type="Rhea" id="RHEA:24504"/>
        <dbReference type="ChEBI" id="CHEBI:15378"/>
        <dbReference type="ChEBI" id="CHEBI:15379"/>
        <dbReference type="ChEBI" id="CHEBI:15740"/>
        <dbReference type="ChEBI" id="CHEBI:16723"/>
        <dbReference type="ChEBI" id="CHEBI:49252"/>
        <dbReference type="EC" id="1.13.11.54"/>
    </reaction>
</comment>
<comment type="catalytic activity">
    <reaction evidence="1">
        <text>1,2-dihydroxy-5-(methylsulfanyl)pent-1-en-3-one + O2 = 3-(methylsulfanyl)propanoate + CO + formate + 2 H(+)</text>
        <dbReference type="Rhea" id="RHEA:14161"/>
        <dbReference type="ChEBI" id="CHEBI:15378"/>
        <dbReference type="ChEBI" id="CHEBI:15379"/>
        <dbReference type="ChEBI" id="CHEBI:15740"/>
        <dbReference type="ChEBI" id="CHEBI:17245"/>
        <dbReference type="ChEBI" id="CHEBI:49016"/>
        <dbReference type="ChEBI" id="CHEBI:49252"/>
        <dbReference type="EC" id="1.13.11.53"/>
    </reaction>
</comment>
<comment type="cofactor">
    <cofactor evidence="1">
        <name>Fe(2+)</name>
        <dbReference type="ChEBI" id="CHEBI:29033"/>
    </cofactor>
    <cofactor evidence="1">
        <name>Ni(2+)</name>
        <dbReference type="ChEBI" id="CHEBI:49786"/>
    </cofactor>
    <text evidence="1">Binds either 1 Fe or Ni cation per monomer. Iron-binding promotes an acireductone dioxygenase reaction producing 2-keto-4-methylthiobutyrate, while nickel-binding promotes an acireductone dioxygenase reaction producing 3-(methylsulfanyl)propanoate.</text>
</comment>
<comment type="pathway">
    <text evidence="1">Amino-acid biosynthesis; L-methionine biosynthesis via salvage pathway; L-methionine from S-methyl-5-thio-alpha-D-ribose 1-phosphate: step 5/6.</text>
</comment>
<comment type="subcellular location">
    <subcellularLocation>
        <location evidence="1">Cytoplasm</location>
    </subcellularLocation>
    <subcellularLocation>
        <location evidence="1">Nucleus</location>
    </subcellularLocation>
</comment>
<comment type="similarity">
    <text evidence="1">Belongs to the acireductone dioxygenase (ARD) family.</text>
</comment>
<keyword id="KW-0028">Amino-acid biosynthesis</keyword>
<keyword id="KW-0963">Cytoplasm</keyword>
<keyword id="KW-0223">Dioxygenase</keyword>
<keyword id="KW-0408">Iron</keyword>
<keyword id="KW-0479">Metal-binding</keyword>
<keyword id="KW-0486">Methionine biosynthesis</keyword>
<keyword id="KW-0533">Nickel</keyword>
<keyword id="KW-0539">Nucleus</keyword>
<keyword id="KW-0560">Oxidoreductase</keyword>
<keyword id="KW-1185">Reference proteome</keyword>
<gene>
    <name type="primary">ARD4</name>
    <name type="ordered locus">Os10g0419500</name>
    <name type="ordered locus">LOC_Os10g28360</name>
    <name evidence="2" type="ORF">OsJ_31545</name>
</gene>
<reference key="1">
    <citation type="journal article" date="2003" name="Science">
        <title>In-depth view of structure, activity, and evolution of rice chromosome 10.</title>
        <authorList>
            <person name="Yu Y."/>
            <person name="Rambo T."/>
            <person name="Currie J."/>
            <person name="Saski C."/>
            <person name="Kim H.-R."/>
            <person name="Collura K."/>
            <person name="Thompson S."/>
            <person name="Simmons J."/>
            <person name="Yang T.-J."/>
            <person name="Nah G."/>
            <person name="Patel A.J."/>
            <person name="Thurmond S."/>
            <person name="Henry D."/>
            <person name="Oates R."/>
            <person name="Palmer M."/>
            <person name="Pries G."/>
            <person name="Gibson J."/>
            <person name="Anderson H."/>
            <person name="Paradkar M."/>
            <person name="Crane L."/>
            <person name="Dale J."/>
            <person name="Carver M.B."/>
            <person name="Wood T."/>
            <person name="Frisch D."/>
            <person name="Engler F."/>
            <person name="Soderlund C."/>
            <person name="Palmer L.E."/>
            <person name="Teytelman L."/>
            <person name="Nascimento L."/>
            <person name="De la Bastide M."/>
            <person name="Spiegel L."/>
            <person name="Ware D."/>
            <person name="O'Shaughnessy A."/>
            <person name="Dike S."/>
            <person name="Dedhia N."/>
            <person name="Preston R."/>
            <person name="Huang E."/>
            <person name="Ferraro K."/>
            <person name="Kuit K."/>
            <person name="Miller B."/>
            <person name="Zutavern T."/>
            <person name="Katzenberger F."/>
            <person name="Muller S."/>
            <person name="Balija V."/>
            <person name="Martienssen R.A."/>
            <person name="Stein L."/>
            <person name="Minx P."/>
            <person name="Johnson D."/>
            <person name="Cordum H."/>
            <person name="Mardis E."/>
            <person name="Cheng Z."/>
            <person name="Jiang J."/>
            <person name="Wilson R."/>
            <person name="McCombie W.R."/>
            <person name="Wing R.A."/>
            <person name="Yuan Q."/>
            <person name="Ouyang S."/>
            <person name="Liu J."/>
            <person name="Jones K.M."/>
            <person name="Gansberger K."/>
            <person name="Moffat K."/>
            <person name="Hill J."/>
            <person name="Tsitrin T."/>
            <person name="Overton L."/>
            <person name="Bera J."/>
            <person name="Kim M."/>
            <person name="Jin S."/>
            <person name="Tallon L."/>
            <person name="Ciecko A."/>
            <person name="Pai G."/>
            <person name="Van Aken S."/>
            <person name="Utterback T."/>
            <person name="Reidmuller S."/>
            <person name="Bormann J."/>
            <person name="Feldblyum T."/>
            <person name="Hsiao J."/>
            <person name="Zismann V."/>
            <person name="Blunt S."/>
            <person name="de Vazeille A.R."/>
            <person name="Shaffer T."/>
            <person name="Koo H."/>
            <person name="Suh B."/>
            <person name="Yang Q."/>
            <person name="Haas B."/>
            <person name="Peterson J."/>
            <person name="Pertea M."/>
            <person name="Volfovsky N."/>
            <person name="Wortman J."/>
            <person name="White O."/>
            <person name="Salzberg S.L."/>
            <person name="Fraser C.M."/>
            <person name="Buell C.R."/>
            <person name="Messing J."/>
            <person name="Song R."/>
            <person name="Fuks G."/>
            <person name="Llaca V."/>
            <person name="Kovchak S."/>
            <person name="Young S."/>
            <person name="Bowers J.E."/>
            <person name="Paterson A.H."/>
            <person name="Johns M.A."/>
            <person name="Mao L."/>
            <person name="Pan H."/>
            <person name="Dean R.A."/>
        </authorList>
    </citation>
    <scope>NUCLEOTIDE SEQUENCE [LARGE SCALE GENOMIC DNA]</scope>
    <source>
        <strain>cv. Nipponbare</strain>
    </source>
</reference>
<reference key="2">
    <citation type="journal article" date="2005" name="Nature">
        <title>The map-based sequence of the rice genome.</title>
        <authorList>
            <consortium name="International rice genome sequencing project (IRGSP)"/>
        </authorList>
    </citation>
    <scope>NUCLEOTIDE SEQUENCE [LARGE SCALE GENOMIC DNA]</scope>
    <source>
        <strain>cv. Nipponbare</strain>
    </source>
</reference>
<reference key="3">
    <citation type="journal article" date="2008" name="Nucleic Acids Res.">
        <title>The rice annotation project database (RAP-DB): 2008 update.</title>
        <authorList>
            <consortium name="The rice annotation project (RAP)"/>
        </authorList>
    </citation>
    <scope>GENOME REANNOTATION</scope>
    <source>
        <strain>cv. Nipponbare</strain>
    </source>
</reference>
<reference key="4">
    <citation type="journal article" date="2013" name="Rice">
        <title>Improvement of the Oryza sativa Nipponbare reference genome using next generation sequence and optical map data.</title>
        <authorList>
            <person name="Kawahara Y."/>
            <person name="de la Bastide M."/>
            <person name="Hamilton J.P."/>
            <person name="Kanamori H."/>
            <person name="McCombie W.R."/>
            <person name="Ouyang S."/>
            <person name="Schwartz D.C."/>
            <person name="Tanaka T."/>
            <person name="Wu J."/>
            <person name="Zhou S."/>
            <person name="Childs K.L."/>
            <person name="Davidson R.M."/>
            <person name="Lin H."/>
            <person name="Quesada-Ocampo L."/>
            <person name="Vaillancourt B."/>
            <person name="Sakai H."/>
            <person name="Lee S.S."/>
            <person name="Kim J."/>
            <person name="Numa H."/>
            <person name="Itoh T."/>
            <person name="Buell C.R."/>
            <person name="Matsumoto T."/>
        </authorList>
    </citation>
    <scope>GENOME REANNOTATION</scope>
    <source>
        <strain>cv. Nipponbare</strain>
    </source>
</reference>
<reference key="5">
    <citation type="journal article" date="2005" name="PLoS Biol.">
        <title>The genomes of Oryza sativa: a history of duplications.</title>
        <authorList>
            <person name="Yu J."/>
            <person name="Wang J."/>
            <person name="Lin W."/>
            <person name="Li S."/>
            <person name="Li H."/>
            <person name="Zhou J."/>
            <person name="Ni P."/>
            <person name="Dong W."/>
            <person name="Hu S."/>
            <person name="Zeng C."/>
            <person name="Zhang J."/>
            <person name="Zhang Y."/>
            <person name="Li R."/>
            <person name="Xu Z."/>
            <person name="Li S."/>
            <person name="Li X."/>
            <person name="Zheng H."/>
            <person name="Cong L."/>
            <person name="Lin L."/>
            <person name="Yin J."/>
            <person name="Geng J."/>
            <person name="Li G."/>
            <person name="Shi J."/>
            <person name="Liu J."/>
            <person name="Lv H."/>
            <person name="Li J."/>
            <person name="Wang J."/>
            <person name="Deng Y."/>
            <person name="Ran L."/>
            <person name="Shi X."/>
            <person name="Wang X."/>
            <person name="Wu Q."/>
            <person name="Li C."/>
            <person name="Ren X."/>
            <person name="Wang J."/>
            <person name="Wang X."/>
            <person name="Li D."/>
            <person name="Liu D."/>
            <person name="Zhang X."/>
            <person name="Ji Z."/>
            <person name="Zhao W."/>
            <person name="Sun Y."/>
            <person name="Zhang Z."/>
            <person name="Bao J."/>
            <person name="Han Y."/>
            <person name="Dong L."/>
            <person name="Ji J."/>
            <person name="Chen P."/>
            <person name="Wu S."/>
            <person name="Liu J."/>
            <person name="Xiao Y."/>
            <person name="Bu D."/>
            <person name="Tan J."/>
            <person name="Yang L."/>
            <person name="Ye C."/>
            <person name="Zhang J."/>
            <person name="Xu J."/>
            <person name="Zhou Y."/>
            <person name="Yu Y."/>
            <person name="Zhang B."/>
            <person name="Zhuang S."/>
            <person name="Wei H."/>
            <person name="Liu B."/>
            <person name="Lei M."/>
            <person name="Yu H."/>
            <person name="Li Y."/>
            <person name="Xu H."/>
            <person name="Wei S."/>
            <person name="He X."/>
            <person name="Fang L."/>
            <person name="Zhang Z."/>
            <person name="Zhang Y."/>
            <person name="Huang X."/>
            <person name="Su Z."/>
            <person name="Tong W."/>
            <person name="Li J."/>
            <person name="Tong Z."/>
            <person name="Li S."/>
            <person name="Ye J."/>
            <person name="Wang L."/>
            <person name="Fang L."/>
            <person name="Lei T."/>
            <person name="Chen C.-S."/>
            <person name="Chen H.-C."/>
            <person name="Xu Z."/>
            <person name="Li H."/>
            <person name="Huang H."/>
            <person name="Zhang F."/>
            <person name="Xu H."/>
            <person name="Li N."/>
            <person name="Zhao C."/>
            <person name="Li S."/>
            <person name="Dong L."/>
            <person name="Huang Y."/>
            <person name="Li L."/>
            <person name="Xi Y."/>
            <person name="Qi Q."/>
            <person name="Li W."/>
            <person name="Zhang B."/>
            <person name="Hu W."/>
            <person name="Zhang Y."/>
            <person name="Tian X."/>
            <person name="Jiao Y."/>
            <person name="Liang X."/>
            <person name="Jin J."/>
            <person name="Gao L."/>
            <person name="Zheng W."/>
            <person name="Hao B."/>
            <person name="Liu S.-M."/>
            <person name="Wang W."/>
            <person name="Yuan L."/>
            <person name="Cao M."/>
            <person name="McDermott J."/>
            <person name="Samudrala R."/>
            <person name="Wang J."/>
            <person name="Wong G.K.-S."/>
            <person name="Yang H."/>
        </authorList>
    </citation>
    <scope>NUCLEOTIDE SEQUENCE [LARGE SCALE GENOMIC DNA]</scope>
    <source>
        <strain>cv. Nipponbare</strain>
    </source>
</reference>
<reference key="6">
    <citation type="journal article" date="2003" name="Science">
        <title>Collection, mapping, and annotation of over 28,000 cDNA clones from japonica rice.</title>
        <authorList>
            <consortium name="The rice full-length cDNA consortium"/>
        </authorList>
    </citation>
    <scope>NUCLEOTIDE SEQUENCE [LARGE SCALE MRNA]</scope>
    <source>
        <strain>cv. Nipponbare</strain>
    </source>
</reference>
<proteinExistence type="evidence at transcript level"/>